<sequence length="229" mass="24145">MSLLAQLDQKIAANGGLIVSCQPVPDSPLDKPDIVAAMALAAEQAGAVAIRIEGVANLQATRAVVSVPIIGIVKRDLEDSPVRITAYIEDVDALAQAGADIIAIDGTDRPRPVPVETLLARIHHHGLLAMTDCSTPEDGLACQKLGAEIIGTTLSGYTTPETPEEPDLTLVKRLSDAGCRVIAEGRYNTPAQAADAMRHGAWAVTVGSAITRLEHICQWYNTAMKKAVL</sequence>
<proteinExistence type="inferred from homology"/>
<dbReference type="EC" id="5.1.3.9" evidence="1"/>
<dbReference type="EMBL" id="CP000034">
    <property type="protein sequence ID" value="ABB63389.1"/>
    <property type="molecule type" value="Genomic_DNA"/>
</dbReference>
<dbReference type="RefSeq" id="WP_001308081.1">
    <property type="nucleotide sequence ID" value="NC_007606.1"/>
</dbReference>
<dbReference type="RefSeq" id="YP_404880.1">
    <property type="nucleotide sequence ID" value="NC_007606.1"/>
</dbReference>
<dbReference type="SMR" id="Q32BB6"/>
<dbReference type="STRING" id="300267.SDY_3398"/>
<dbReference type="EnsemblBacteria" id="ABB63389">
    <property type="protein sequence ID" value="ABB63389"/>
    <property type="gene ID" value="SDY_3398"/>
</dbReference>
<dbReference type="KEGG" id="sdy:SDY_3398"/>
<dbReference type="PATRIC" id="fig|300267.13.peg.4054"/>
<dbReference type="HOGENOM" id="CLU_086300_0_0_6"/>
<dbReference type="UniPathway" id="UPA00629">
    <property type="reaction ID" value="UER00682"/>
</dbReference>
<dbReference type="Proteomes" id="UP000002716">
    <property type="component" value="Chromosome"/>
</dbReference>
<dbReference type="GO" id="GO:0005829">
    <property type="term" value="C:cytosol"/>
    <property type="evidence" value="ECO:0007669"/>
    <property type="project" value="TreeGrafter"/>
</dbReference>
<dbReference type="GO" id="GO:0047465">
    <property type="term" value="F:N-acylglucosamine-6-phosphate 2-epimerase activity"/>
    <property type="evidence" value="ECO:0007669"/>
    <property type="project" value="UniProtKB-EC"/>
</dbReference>
<dbReference type="GO" id="GO:0005975">
    <property type="term" value="P:carbohydrate metabolic process"/>
    <property type="evidence" value="ECO:0007669"/>
    <property type="project" value="UniProtKB-UniRule"/>
</dbReference>
<dbReference type="GO" id="GO:0006053">
    <property type="term" value="P:N-acetylmannosamine catabolic process"/>
    <property type="evidence" value="ECO:0007669"/>
    <property type="project" value="TreeGrafter"/>
</dbReference>
<dbReference type="GO" id="GO:0019262">
    <property type="term" value="P:N-acetylneuraminate catabolic process"/>
    <property type="evidence" value="ECO:0007669"/>
    <property type="project" value="UniProtKB-UniRule"/>
</dbReference>
<dbReference type="CDD" id="cd04729">
    <property type="entry name" value="NanE"/>
    <property type="match status" value="1"/>
</dbReference>
<dbReference type="FunFam" id="3.20.20.70:FF:000035">
    <property type="entry name" value="Putative N-acetylmannosamine-6-phosphate 2-epimerase"/>
    <property type="match status" value="1"/>
</dbReference>
<dbReference type="Gene3D" id="3.20.20.70">
    <property type="entry name" value="Aldolase class I"/>
    <property type="match status" value="1"/>
</dbReference>
<dbReference type="HAMAP" id="MF_01235">
    <property type="entry name" value="ManNAc6P_epimer"/>
    <property type="match status" value="1"/>
</dbReference>
<dbReference type="InterPro" id="IPR013785">
    <property type="entry name" value="Aldolase_TIM"/>
</dbReference>
<dbReference type="InterPro" id="IPR007260">
    <property type="entry name" value="NanE"/>
</dbReference>
<dbReference type="InterPro" id="IPR011060">
    <property type="entry name" value="RibuloseP-bd_barrel"/>
</dbReference>
<dbReference type="NCBIfam" id="NF002231">
    <property type="entry name" value="PRK01130.1"/>
    <property type="match status" value="1"/>
</dbReference>
<dbReference type="PANTHER" id="PTHR36204">
    <property type="entry name" value="N-ACETYLMANNOSAMINE-6-PHOSPHATE 2-EPIMERASE-RELATED"/>
    <property type="match status" value="1"/>
</dbReference>
<dbReference type="PANTHER" id="PTHR36204:SF1">
    <property type="entry name" value="N-ACETYLMANNOSAMINE-6-PHOSPHATE 2-EPIMERASE-RELATED"/>
    <property type="match status" value="1"/>
</dbReference>
<dbReference type="Pfam" id="PF04131">
    <property type="entry name" value="NanE"/>
    <property type="match status" value="1"/>
</dbReference>
<dbReference type="SUPFAM" id="SSF51366">
    <property type="entry name" value="Ribulose-phoshate binding barrel"/>
    <property type="match status" value="1"/>
</dbReference>
<keyword id="KW-0119">Carbohydrate metabolism</keyword>
<keyword id="KW-0413">Isomerase</keyword>
<keyword id="KW-1185">Reference proteome</keyword>
<protein>
    <recommendedName>
        <fullName evidence="1">Putative N-acetylmannosamine-6-phosphate 2-epimerase</fullName>
        <ecNumber evidence="1">5.1.3.9</ecNumber>
    </recommendedName>
    <alternativeName>
        <fullName evidence="1">ManNAc-6-P epimerase</fullName>
    </alternativeName>
</protein>
<reference key="1">
    <citation type="journal article" date="2005" name="Nucleic Acids Res.">
        <title>Genome dynamics and diversity of Shigella species, the etiologic agents of bacillary dysentery.</title>
        <authorList>
            <person name="Yang F."/>
            <person name="Yang J."/>
            <person name="Zhang X."/>
            <person name="Chen L."/>
            <person name="Jiang Y."/>
            <person name="Yan Y."/>
            <person name="Tang X."/>
            <person name="Wang J."/>
            <person name="Xiong Z."/>
            <person name="Dong J."/>
            <person name="Xue Y."/>
            <person name="Zhu Y."/>
            <person name="Xu X."/>
            <person name="Sun L."/>
            <person name="Chen S."/>
            <person name="Nie H."/>
            <person name="Peng J."/>
            <person name="Xu J."/>
            <person name="Wang Y."/>
            <person name="Yuan Z."/>
            <person name="Wen Y."/>
            <person name="Yao Z."/>
            <person name="Shen Y."/>
            <person name="Qiang B."/>
            <person name="Hou Y."/>
            <person name="Yu J."/>
            <person name="Jin Q."/>
        </authorList>
    </citation>
    <scope>NUCLEOTIDE SEQUENCE [LARGE SCALE GENOMIC DNA]</scope>
    <source>
        <strain>Sd197</strain>
    </source>
</reference>
<comment type="function">
    <text evidence="1">Converts N-acetylmannosamine-6-phosphate (ManNAc-6-P) to N-acetylglucosamine-6-phosphate (GlcNAc-6-P).</text>
</comment>
<comment type="catalytic activity">
    <reaction evidence="1">
        <text>an N-acyl-D-glucosamine 6-phosphate = an N-acyl-D-mannosamine 6-phosphate</text>
        <dbReference type="Rhea" id="RHEA:23932"/>
        <dbReference type="ChEBI" id="CHEBI:57599"/>
        <dbReference type="ChEBI" id="CHEBI:57666"/>
        <dbReference type="EC" id="5.1.3.9"/>
    </reaction>
</comment>
<comment type="pathway">
    <text evidence="1">Amino-sugar metabolism; N-acetylneuraminate degradation; D-fructose 6-phosphate from N-acetylneuraminate: step 3/5.</text>
</comment>
<comment type="similarity">
    <text evidence="1">Belongs to the NanE family.</text>
</comment>
<feature type="chain" id="PRO_0000301481" description="Putative N-acetylmannosamine-6-phosphate 2-epimerase">
    <location>
        <begin position="1"/>
        <end position="229"/>
    </location>
</feature>
<gene>
    <name evidence="1" type="primary">nanE</name>
    <name type="ordered locus">SDY_3398</name>
</gene>
<organism>
    <name type="scientific">Shigella dysenteriae serotype 1 (strain Sd197)</name>
    <dbReference type="NCBI Taxonomy" id="300267"/>
    <lineage>
        <taxon>Bacteria</taxon>
        <taxon>Pseudomonadati</taxon>
        <taxon>Pseudomonadota</taxon>
        <taxon>Gammaproteobacteria</taxon>
        <taxon>Enterobacterales</taxon>
        <taxon>Enterobacteriaceae</taxon>
        <taxon>Shigella</taxon>
    </lineage>
</organism>
<evidence type="ECO:0000255" key="1">
    <source>
        <dbReference type="HAMAP-Rule" id="MF_01235"/>
    </source>
</evidence>
<accession>Q32BB6</accession>
<name>NANE_SHIDS</name>